<proteinExistence type="inferred from homology"/>
<reference key="1">
    <citation type="journal article" date="1995" name="Science">
        <title>Whole-genome random sequencing and assembly of Haemophilus influenzae Rd.</title>
        <authorList>
            <person name="Fleischmann R.D."/>
            <person name="Adams M.D."/>
            <person name="White O."/>
            <person name="Clayton R.A."/>
            <person name="Kirkness E.F."/>
            <person name="Kerlavage A.R."/>
            <person name="Bult C.J."/>
            <person name="Tomb J.-F."/>
            <person name="Dougherty B.A."/>
            <person name="Merrick J.M."/>
            <person name="McKenney K."/>
            <person name="Sutton G.G."/>
            <person name="FitzHugh W."/>
            <person name="Fields C.A."/>
            <person name="Gocayne J.D."/>
            <person name="Scott J.D."/>
            <person name="Shirley R."/>
            <person name="Liu L.-I."/>
            <person name="Glodek A."/>
            <person name="Kelley J.M."/>
            <person name="Weidman J.F."/>
            <person name="Phillips C.A."/>
            <person name="Spriggs T."/>
            <person name="Hedblom E."/>
            <person name="Cotton M.D."/>
            <person name="Utterback T.R."/>
            <person name="Hanna M.C."/>
            <person name="Nguyen D.T."/>
            <person name="Saudek D.M."/>
            <person name="Brandon R.C."/>
            <person name="Fine L.D."/>
            <person name="Fritchman J.L."/>
            <person name="Fuhrmann J.L."/>
            <person name="Geoghagen N.S.M."/>
            <person name="Gnehm C.L."/>
            <person name="McDonald L.A."/>
            <person name="Small K.V."/>
            <person name="Fraser C.M."/>
            <person name="Smith H.O."/>
            <person name="Venter J.C."/>
        </authorList>
    </citation>
    <scope>NUCLEOTIDE SEQUENCE [LARGE SCALE GENOMIC DNA]</scope>
    <source>
        <strain>ATCC 51907 / DSM 11121 / KW20 / Rd</strain>
    </source>
</reference>
<name>MLAE_HAEIN</name>
<evidence type="ECO:0000250" key="1">
    <source>
        <dbReference type="UniProtKB" id="P64606"/>
    </source>
</evidence>
<evidence type="ECO:0000255" key="2"/>
<evidence type="ECO:0000305" key="3"/>
<keyword id="KW-0997">Cell inner membrane</keyword>
<keyword id="KW-1003">Cell membrane</keyword>
<keyword id="KW-0472">Membrane</keyword>
<keyword id="KW-1185">Reference proteome</keyword>
<keyword id="KW-0812">Transmembrane</keyword>
<keyword id="KW-1133">Transmembrane helix</keyword>
<keyword id="KW-0813">Transport</keyword>
<comment type="function">
    <text evidence="1">Part of the ABC transporter complex MlaFEDB, which is involved in a phospholipid transport pathway that maintains lipid asymmetry in the outer membrane by retrograde trafficking of phospholipids from the outer membrane to the inner membrane. Probably responsible for the translocation of the substrate across the membrane.</text>
</comment>
<comment type="subunit">
    <text evidence="1">The complex is composed of two ATP-binding proteins (MlaF), two transmembrane proteins (MlaE), two cytoplasmic solute-binding proteins (MlaB) and six periplasmic solute-binding proteins (MlaD).</text>
</comment>
<comment type="subcellular location">
    <subcellularLocation>
        <location evidence="1">Cell inner membrane</location>
        <topology evidence="2">Multi-pass membrane protein</topology>
    </subcellularLocation>
</comment>
<comment type="similarity">
    <text evidence="3">Belongs to the MlaE permease family.</text>
</comment>
<feature type="chain" id="PRO_0000169469" description="Intermembrane phospholipid transport system permease protein MlaE">
    <location>
        <begin position="1"/>
        <end position="261"/>
    </location>
</feature>
<feature type="topological domain" description="Cytoplasmic" evidence="1">
    <location>
        <begin position="1"/>
        <end position="12"/>
    </location>
</feature>
<feature type="transmembrane region" description="Helical" evidence="2">
    <location>
        <begin position="13"/>
        <end position="33"/>
    </location>
</feature>
<feature type="topological domain" description="Periplasmic" evidence="1">
    <location>
        <begin position="34"/>
        <end position="49"/>
    </location>
</feature>
<feature type="transmembrane region" description="Helical" evidence="2">
    <location>
        <begin position="50"/>
        <end position="70"/>
    </location>
</feature>
<feature type="topological domain" description="Cytoplasmic" evidence="1">
    <location>
        <begin position="71"/>
        <end position="147"/>
    </location>
</feature>
<feature type="transmembrane region" description="Helical" evidence="2">
    <location>
        <begin position="148"/>
        <end position="168"/>
    </location>
</feature>
<feature type="topological domain" description="Periplasmic" evidence="1">
    <location>
        <begin position="169"/>
        <end position="198"/>
    </location>
</feature>
<feature type="transmembrane region" description="Helical" evidence="2">
    <location>
        <begin position="199"/>
        <end position="219"/>
    </location>
</feature>
<feature type="topological domain" description="Cytoplasmic" evidence="1">
    <location>
        <begin position="220"/>
        <end position="238"/>
    </location>
</feature>
<feature type="transmembrane region" description="Helical" evidence="2">
    <location>
        <begin position="239"/>
        <end position="259"/>
    </location>
</feature>
<feature type="topological domain" description="Periplasmic" evidence="1">
    <location>
        <begin position="260"/>
        <end position="261"/>
    </location>
</feature>
<organism>
    <name type="scientific">Haemophilus influenzae (strain ATCC 51907 / DSM 11121 / KW20 / Rd)</name>
    <dbReference type="NCBI Taxonomy" id="71421"/>
    <lineage>
        <taxon>Bacteria</taxon>
        <taxon>Pseudomonadati</taxon>
        <taxon>Pseudomonadota</taxon>
        <taxon>Gammaproteobacteria</taxon>
        <taxon>Pasteurellales</taxon>
        <taxon>Pasteurellaceae</taxon>
        <taxon>Haemophilus</taxon>
    </lineage>
</organism>
<sequence>MIVNFISALGKQVIDFFRALGRAGFMLFGALIGKPQIRKHFPLLVKQMHVLGVQSLLIILLSGLFIGMVLGLQGYVVLIDFSAETSLGQLVALSLLRELGPVVTALLFAGRAGSALTAEIGLMKATEQLSSLEMMAVDPLRRVIAPRFWAGVISMPVLSILFIAIGIWGGSLVGVDWKGVDSGSFWSVMQNSVSWSYDILNGFIKAVFFAVAVTWIALFNGYDCMPTSEGISQATTRTVVHASLVVLGLDFILTAIMFGAG</sequence>
<dbReference type="EMBL" id="L42023">
    <property type="protein sequence ID" value="AAC22742.1"/>
    <property type="molecule type" value="Genomic_DNA"/>
</dbReference>
<dbReference type="PIR" id="D64166">
    <property type="entry name" value="D64166"/>
</dbReference>
<dbReference type="RefSeq" id="NP_439243.1">
    <property type="nucleotide sequence ID" value="NC_000907.1"/>
</dbReference>
<dbReference type="SMR" id="P45030"/>
<dbReference type="STRING" id="71421.HI_1086"/>
<dbReference type="EnsemblBacteria" id="AAC22742">
    <property type="protein sequence ID" value="AAC22742"/>
    <property type="gene ID" value="HI_1086"/>
</dbReference>
<dbReference type="KEGG" id="hin:HI_1086"/>
<dbReference type="PATRIC" id="fig|71421.8.peg.1131"/>
<dbReference type="eggNOG" id="COG0767">
    <property type="taxonomic scope" value="Bacteria"/>
</dbReference>
<dbReference type="HOGENOM" id="CLU_045686_1_1_6"/>
<dbReference type="OrthoDB" id="9806241at2"/>
<dbReference type="PhylomeDB" id="P45030"/>
<dbReference type="BioCyc" id="HINF71421:G1GJ1-1121-MONOMER"/>
<dbReference type="Proteomes" id="UP000000579">
    <property type="component" value="Chromosome"/>
</dbReference>
<dbReference type="GO" id="GO:0043190">
    <property type="term" value="C:ATP-binding cassette (ABC) transporter complex"/>
    <property type="evidence" value="ECO:0007669"/>
    <property type="project" value="InterPro"/>
</dbReference>
<dbReference type="GO" id="GO:0005886">
    <property type="term" value="C:plasma membrane"/>
    <property type="evidence" value="ECO:0000318"/>
    <property type="project" value="GO_Central"/>
</dbReference>
<dbReference type="GO" id="GO:0005548">
    <property type="term" value="F:phospholipid transporter activity"/>
    <property type="evidence" value="ECO:0000318"/>
    <property type="project" value="GO_Central"/>
</dbReference>
<dbReference type="GO" id="GO:0015914">
    <property type="term" value="P:phospholipid transport"/>
    <property type="evidence" value="ECO:0000318"/>
    <property type="project" value="GO_Central"/>
</dbReference>
<dbReference type="InterPro" id="IPR003453">
    <property type="entry name" value="ABC_MlaE_roteobac"/>
</dbReference>
<dbReference type="InterPro" id="IPR053408">
    <property type="entry name" value="MlaE_Permease"/>
</dbReference>
<dbReference type="InterPro" id="IPR030802">
    <property type="entry name" value="Permease_MalE"/>
</dbReference>
<dbReference type="NCBIfam" id="TIGR00056">
    <property type="entry name" value="MlaE family lipid ABC transporter permease subunit"/>
    <property type="match status" value="1"/>
</dbReference>
<dbReference type="NCBIfam" id="NF033619">
    <property type="entry name" value="perm_MlaE_1"/>
    <property type="match status" value="1"/>
</dbReference>
<dbReference type="PANTHER" id="PTHR30188">
    <property type="entry name" value="ABC TRANSPORTER PERMEASE PROTEIN-RELATED"/>
    <property type="match status" value="1"/>
</dbReference>
<dbReference type="PANTHER" id="PTHR30188:SF4">
    <property type="entry name" value="PROTEIN TRIGALACTOSYLDIACYLGLYCEROL 1, CHLOROPLASTIC"/>
    <property type="match status" value="1"/>
</dbReference>
<dbReference type="Pfam" id="PF02405">
    <property type="entry name" value="MlaE"/>
    <property type="match status" value="1"/>
</dbReference>
<protein>
    <recommendedName>
        <fullName evidence="1">Intermembrane phospholipid transport system permease protein MlaE</fullName>
    </recommendedName>
</protein>
<accession>P45030</accession>
<gene>
    <name evidence="1" type="primary">mlaE</name>
    <name type="ordered locus">HI_1086</name>
</gene>